<proteinExistence type="inferred from homology"/>
<sequence length="187" mass="20714">MVSGSFDIGDLKRRMQGATQSLKHELGGLRTGRASSSMLDPVQVDAYGSHMPLNQVATISVPEPRLLSVQVWDKSMVKAVEKAIVDSNLGLSPATEGQVLRLRIPELNEERRKELVKVAHKYAEAAKVAVRHVRRDGLDTLKKLEKNHEISEDDEKRLANDVQKATDSVISEIDQLLAGKEKEILTV</sequence>
<accession>Q3SRH5</accession>
<evidence type="ECO:0000255" key="1">
    <source>
        <dbReference type="HAMAP-Rule" id="MF_00040"/>
    </source>
</evidence>
<organism>
    <name type="scientific">Nitrobacter winogradskyi (strain ATCC 25391 / DSM 10237 / CIP 104748 / NCIMB 11846 / Nb-255)</name>
    <dbReference type="NCBI Taxonomy" id="323098"/>
    <lineage>
        <taxon>Bacteria</taxon>
        <taxon>Pseudomonadati</taxon>
        <taxon>Pseudomonadota</taxon>
        <taxon>Alphaproteobacteria</taxon>
        <taxon>Hyphomicrobiales</taxon>
        <taxon>Nitrobacteraceae</taxon>
        <taxon>Nitrobacter</taxon>
    </lineage>
</organism>
<feature type="chain" id="PRO_0000341024" description="Ribosome-recycling factor">
    <location>
        <begin position="1"/>
        <end position="187"/>
    </location>
</feature>
<comment type="function">
    <text evidence="1">Responsible for the release of ribosomes from messenger RNA at the termination of protein biosynthesis. May increase the efficiency of translation by recycling ribosomes from one round of translation to another.</text>
</comment>
<comment type="subcellular location">
    <subcellularLocation>
        <location evidence="1">Cytoplasm</location>
    </subcellularLocation>
</comment>
<comment type="similarity">
    <text evidence="1">Belongs to the RRF family.</text>
</comment>
<gene>
    <name evidence="1" type="primary">frr</name>
    <name type="ordered locus">Nwi_1856</name>
</gene>
<name>RRF_NITWN</name>
<protein>
    <recommendedName>
        <fullName evidence="1">Ribosome-recycling factor</fullName>
        <shortName evidence="1">RRF</shortName>
    </recommendedName>
    <alternativeName>
        <fullName evidence="1">Ribosome-releasing factor</fullName>
    </alternativeName>
</protein>
<dbReference type="EMBL" id="CP000115">
    <property type="protein sequence ID" value="ABA05116.1"/>
    <property type="molecule type" value="Genomic_DNA"/>
</dbReference>
<dbReference type="RefSeq" id="WP_011315112.1">
    <property type="nucleotide sequence ID" value="NC_007406.1"/>
</dbReference>
<dbReference type="SMR" id="Q3SRH5"/>
<dbReference type="STRING" id="323098.Nwi_1856"/>
<dbReference type="KEGG" id="nwi:Nwi_1856"/>
<dbReference type="eggNOG" id="COG0233">
    <property type="taxonomic scope" value="Bacteria"/>
</dbReference>
<dbReference type="HOGENOM" id="CLU_073981_2_0_5"/>
<dbReference type="OrthoDB" id="9804006at2"/>
<dbReference type="Proteomes" id="UP000002531">
    <property type="component" value="Chromosome"/>
</dbReference>
<dbReference type="GO" id="GO:0005829">
    <property type="term" value="C:cytosol"/>
    <property type="evidence" value="ECO:0007669"/>
    <property type="project" value="GOC"/>
</dbReference>
<dbReference type="GO" id="GO:0043023">
    <property type="term" value="F:ribosomal large subunit binding"/>
    <property type="evidence" value="ECO:0007669"/>
    <property type="project" value="TreeGrafter"/>
</dbReference>
<dbReference type="GO" id="GO:0002184">
    <property type="term" value="P:cytoplasmic translational termination"/>
    <property type="evidence" value="ECO:0007669"/>
    <property type="project" value="TreeGrafter"/>
</dbReference>
<dbReference type="CDD" id="cd00520">
    <property type="entry name" value="RRF"/>
    <property type="match status" value="1"/>
</dbReference>
<dbReference type="FunFam" id="1.10.132.20:FF:000001">
    <property type="entry name" value="Ribosome-recycling factor"/>
    <property type="match status" value="1"/>
</dbReference>
<dbReference type="FunFam" id="3.30.1360.40:FF:000001">
    <property type="entry name" value="Ribosome-recycling factor"/>
    <property type="match status" value="1"/>
</dbReference>
<dbReference type="Gene3D" id="3.30.1360.40">
    <property type="match status" value="1"/>
</dbReference>
<dbReference type="Gene3D" id="1.10.132.20">
    <property type="entry name" value="Ribosome-recycling factor"/>
    <property type="match status" value="1"/>
</dbReference>
<dbReference type="HAMAP" id="MF_00040">
    <property type="entry name" value="RRF"/>
    <property type="match status" value="1"/>
</dbReference>
<dbReference type="InterPro" id="IPR002661">
    <property type="entry name" value="Ribosome_recyc_fac"/>
</dbReference>
<dbReference type="InterPro" id="IPR023584">
    <property type="entry name" value="Ribosome_recyc_fac_dom"/>
</dbReference>
<dbReference type="InterPro" id="IPR036191">
    <property type="entry name" value="RRF_sf"/>
</dbReference>
<dbReference type="NCBIfam" id="TIGR00496">
    <property type="entry name" value="frr"/>
    <property type="match status" value="1"/>
</dbReference>
<dbReference type="PANTHER" id="PTHR20982:SF3">
    <property type="entry name" value="MITOCHONDRIAL RIBOSOME RECYCLING FACTOR PSEUDO 1"/>
    <property type="match status" value="1"/>
</dbReference>
<dbReference type="PANTHER" id="PTHR20982">
    <property type="entry name" value="RIBOSOME RECYCLING FACTOR"/>
    <property type="match status" value="1"/>
</dbReference>
<dbReference type="Pfam" id="PF01765">
    <property type="entry name" value="RRF"/>
    <property type="match status" value="1"/>
</dbReference>
<dbReference type="SUPFAM" id="SSF55194">
    <property type="entry name" value="Ribosome recycling factor, RRF"/>
    <property type="match status" value="1"/>
</dbReference>
<reference key="1">
    <citation type="journal article" date="2006" name="Appl. Environ. Microbiol.">
        <title>Genome sequence of the chemolithoautotrophic nitrite-oxidizing bacterium Nitrobacter winogradskyi Nb-255.</title>
        <authorList>
            <person name="Starkenburg S.R."/>
            <person name="Chain P.S.G."/>
            <person name="Sayavedra-Soto L.A."/>
            <person name="Hauser L."/>
            <person name="Land M.L."/>
            <person name="Larimer F.W."/>
            <person name="Malfatti S.A."/>
            <person name="Klotz M.G."/>
            <person name="Bottomley P.J."/>
            <person name="Arp D.J."/>
            <person name="Hickey W.J."/>
        </authorList>
    </citation>
    <scope>NUCLEOTIDE SEQUENCE [LARGE SCALE GENOMIC DNA]</scope>
    <source>
        <strain>ATCC 25391 / DSM 10237 / CIP 104748 / NCIMB 11846 / Nb-255</strain>
    </source>
</reference>
<keyword id="KW-0963">Cytoplasm</keyword>
<keyword id="KW-0648">Protein biosynthesis</keyword>
<keyword id="KW-1185">Reference proteome</keyword>